<comment type="function">
    <text evidence="2 4">PPIases accelerate the folding of proteins (Probable). Substrate specificity investigated with 'Suc-Ala-Xaa-Pro-Phe-4-nitroanilide' where Xaa is the amino acid tested, was found to be Phe &gt; Leu &gt;&gt; Ile &gt; Lys = Ala &gt; Trp &gt; His &gt;&gt; Gln (PubMed:9188461).</text>
</comment>
<comment type="catalytic activity">
    <reaction evidence="2">
        <text>[protein]-peptidylproline (omega=180) = [protein]-peptidylproline (omega=0)</text>
        <dbReference type="Rhea" id="RHEA:16237"/>
        <dbReference type="Rhea" id="RHEA-COMP:10747"/>
        <dbReference type="Rhea" id="RHEA-COMP:10748"/>
        <dbReference type="ChEBI" id="CHEBI:83833"/>
        <dbReference type="ChEBI" id="CHEBI:83834"/>
        <dbReference type="EC" id="5.2.1.8"/>
    </reaction>
</comment>
<comment type="activity regulation">
    <text evidence="2">Reversibly inhibited by Ni(2+) ions.</text>
</comment>
<comment type="mass spectrometry"/>
<comment type="similarity">
    <text evidence="4">Belongs to the FKBP-type PPIase family.</text>
</comment>
<evidence type="ECO:0000255" key="1">
    <source>
        <dbReference type="PROSITE-ProRule" id="PRU00277"/>
    </source>
</evidence>
<evidence type="ECO:0000269" key="2">
    <source>
    </source>
</evidence>
<evidence type="ECO:0000303" key="3">
    <source>
    </source>
</evidence>
<evidence type="ECO:0000305" key="4"/>
<evidence type="ECO:0007829" key="5">
    <source>
        <dbReference type="PDB" id="4DT4"/>
    </source>
</evidence>
<proteinExistence type="evidence at protein level"/>
<reference key="1">
    <citation type="journal article" date="1991" name="Nucleic Acids Res.">
        <title>Nucleotide sequence of the lsp-dapB interval in Escherichia coli.</title>
        <authorList>
            <person name="Bouvier J."/>
            <person name="Stragier P."/>
        </authorList>
    </citation>
    <scope>NUCLEOTIDE SEQUENCE [GENOMIC DNA]</scope>
    <source>
        <strain>K12</strain>
    </source>
</reference>
<reference key="2">
    <citation type="journal article" date="1992" name="Nucleic Acids Res.">
        <title>Systematic sequencing of the Escherichia coli genome: analysis of the 0-2.4 min region.</title>
        <authorList>
            <person name="Yura T."/>
            <person name="Mori H."/>
            <person name="Nagai H."/>
            <person name="Nagata T."/>
            <person name="Ishihama A."/>
            <person name="Fujita N."/>
            <person name="Isono K."/>
            <person name="Mizobuchi K."/>
            <person name="Nakata A."/>
        </authorList>
    </citation>
    <scope>NUCLEOTIDE SEQUENCE [LARGE SCALE GENOMIC DNA]</scope>
    <source>
        <strain>K12</strain>
    </source>
</reference>
<reference key="3">
    <citation type="journal article" date="1997" name="Science">
        <title>The complete genome sequence of Escherichia coli K-12.</title>
        <authorList>
            <person name="Blattner F.R."/>
            <person name="Plunkett G. III"/>
            <person name="Bloch C.A."/>
            <person name="Perna N.T."/>
            <person name="Burland V."/>
            <person name="Riley M."/>
            <person name="Collado-Vides J."/>
            <person name="Glasner J.D."/>
            <person name="Rode C.K."/>
            <person name="Mayhew G.F."/>
            <person name="Gregor J."/>
            <person name="Davis N.W."/>
            <person name="Kirkpatrick H.A."/>
            <person name="Goeden M.A."/>
            <person name="Rose D.J."/>
            <person name="Mau B."/>
            <person name="Shao Y."/>
        </authorList>
    </citation>
    <scope>NUCLEOTIDE SEQUENCE [LARGE SCALE GENOMIC DNA]</scope>
    <source>
        <strain>K12 / MG1655 / ATCC 47076</strain>
    </source>
</reference>
<reference key="4">
    <citation type="journal article" date="2006" name="Mol. Syst. Biol.">
        <title>Highly accurate genome sequences of Escherichia coli K-12 strains MG1655 and W3110.</title>
        <authorList>
            <person name="Hayashi K."/>
            <person name="Morooka N."/>
            <person name="Yamamoto Y."/>
            <person name="Fujita K."/>
            <person name="Isono K."/>
            <person name="Choi S."/>
            <person name="Ohtsubo E."/>
            <person name="Baba T."/>
            <person name="Wanner B.L."/>
            <person name="Mori H."/>
            <person name="Horiuchi T."/>
        </authorList>
    </citation>
    <scope>NUCLEOTIDE SEQUENCE [LARGE SCALE GENOMIC DNA]</scope>
    <source>
        <strain>K12 / W3110 / ATCC 27325 / DSM 5911</strain>
    </source>
</reference>
<reference key="5">
    <citation type="journal article" date="1997" name="J. Biol. Chem.">
        <title>The Escherichia coli SlyD is a metal ion-regulated peptidyl-prolyl cis/trans-isomerase.</title>
        <authorList>
            <person name="Hottenrott S."/>
            <person name="Schumann T."/>
            <person name="Plueckthun A."/>
            <person name="Fischer G."/>
            <person name="Rahfeld J.-U."/>
        </authorList>
    </citation>
    <scope>MASS SPECTROMETRY</scope>
    <scope>FUNCTION</scope>
    <scope>CATALYTIC ACTIVITY</scope>
    <source>
        <strain>BL21</strain>
    </source>
</reference>
<feature type="initiator methionine" description="Removed">
    <location>
        <position position="1"/>
    </location>
</feature>
<feature type="chain" id="PRO_0000075369" description="FKBP-type 16 kDa peptidyl-prolyl cis-trans isomerase">
    <location>
        <begin position="2"/>
        <end position="149"/>
    </location>
</feature>
<feature type="domain" description="PPIase FKBP-type" evidence="1">
    <location>
        <begin position="2"/>
        <end position="72"/>
    </location>
</feature>
<feature type="strand" evidence="5">
    <location>
        <begin position="10"/>
        <end position="19"/>
    </location>
</feature>
<feature type="strand" evidence="5">
    <location>
        <begin position="24"/>
        <end position="27"/>
    </location>
</feature>
<feature type="helix" evidence="5">
    <location>
        <begin position="28"/>
        <end position="31"/>
    </location>
</feature>
<feature type="strand" evidence="5">
    <location>
        <begin position="35"/>
        <end position="38"/>
    </location>
</feature>
<feature type="strand" evidence="5">
    <location>
        <begin position="41"/>
        <end position="44"/>
    </location>
</feature>
<feature type="helix" evidence="5">
    <location>
        <begin position="46"/>
        <end position="52"/>
    </location>
</feature>
<feature type="strand" evidence="5">
    <location>
        <begin position="60"/>
        <end position="65"/>
    </location>
</feature>
<feature type="helix" evidence="5">
    <location>
        <begin position="67"/>
        <end position="69"/>
    </location>
</feature>
<feature type="helix" evidence="5">
    <location>
        <begin position="76"/>
        <end position="78"/>
    </location>
</feature>
<feature type="strand" evidence="5">
    <location>
        <begin position="79"/>
        <end position="83"/>
    </location>
</feature>
<feature type="helix" evidence="5">
    <location>
        <begin position="84"/>
        <end position="87"/>
    </location>
</feature>
<feature type="turn" evidence="5">
    <location>
        <begin position="88"/>
        <end position="90"/>
    </location>
</feature>
<feature type="strand" evidence="5">
    <location>
        <begin position="98"/>
        <end position="102"/>
    </location>
</feature>
<feature type="strand" evidence="5">
    <location>
        <begin position="108"/>
        <end position="117"/>
    </location>
</feature>
<feature type="strand" evidence="5">
    <location>
        <begin position="120"/>
        <end position="124"/>
    </location>
</feature>
<feature type="turn" evidence="5">
    <location>
        <begin position="128"/>
        <end position="131"/>
    </location>
</feature>
<feature type="strand" evidence="5">
    <location>
        <begin position="134"/>
        <end position="144"/>
    </location>
</feature>
<name>FKBX_ECOLI</name>
<protein>
    <recommendedName>
        <fullName>FKBP-type 16 kDa peptidyl-prolyl cis-trans isomerase</fullName>
        <shortName evidence="3">PPIase</shortName>
        <ecNumber evidence="2">5.2.1.8</ecNumber>
    </recommendedName>
    <alternativeName>
        <fullName>Rotamase</fullName>
    </alternativeName>
</protein>
<gene>
    <name type="primary">fkpB</name>
    <name type="synonym">slpA</name>
    <name type="synonym">yaaD</name>
    <name type="ordered locus">b0028</name>
    <name type="ordered locus">JW0026</name>
</gene>
<organism>
    <name type="scientific">Escherichia coli (strain K12)</name>
    <dbReference type="NCBI Taxonomy" id="83333"/>
    <lineage>
        <taxon>Bacteria</taxon>
        <taxon>Pseudomonadati</taxon>
        <taxon>Pseudomonadota</taxon>
        <taxon>Gammaproteobacteria</taxon>
        <taxon>Enterobacterales</taxon>
        <taxon>Enterobacteriaceae</taxon>
        <taxon>Escherichia</taxon>
    </lineage>
</organism>
<dbReference type="EC" id="5.2.1.8" evidence="2"/>
<dbReference type="EMBL" id="X54945">
    <property type="protein sequence ID" value="CAA38706.1"/>
    <property type="molecule type" value="Genomic_DNA"/>
</dbReference>
<dbReference type="EMBL" id="U00096">
    <property type="protein sequence ID" value="AAC73139.1"/>
    <property type="molecule type" value="Genomic_DNA"/>
</dbReference>
<dbReference type="EMBL" id="AP009048">
    <property type="protein sequence ID" value="BAB96597.1"/>
    <property type="molecule type" value="Genomic_DNA"/>
</dbReference>
<dbReference type="PIR" id="JE0402">
    <property type="entry name" value="JE0402"/>
</dbReference>
<dbReference type="RefSeq" id="NP_414569.1">
    <property type="nucleotide sequence ID" value="NC_000913.3"/>
</dbReference>
<dbReference type="RefSeq" id="WP_000004655.1">
    <property type="nucleotide sequence ID" value="NZ_STEB01000010.1"/>
</dbReference>
<dbReference type="PDB" id="2M2A">
    <property type="method" value="NMR"/>
    <property type="chains" value="A=1-148"/>
</dbReference>
<dbReference type="PDB" id="4DT4">
    <property type="method" value="X-ray"/>
    <property type="resolution" value="1.35 A"/>
    <property type="chains" value="A=1-149"/>
</dbReference>
<dbReference type="PDB" id="5I7Q">
    <property type="method" value="X-ray"/>
    <property type="resolution" value="1.90 A"/>
    <property type="chains" value="A=73-132"/>
</dbReference>
<dbReference type="PDBsum" id="2M2A"/>
<dbReference type="PDBsum" id="4DT4"/>
<dbReference type="PDBsum" id="5I7Q"/>
<dbReference type="BMRB" id="P0AEM0"/>
<dbReference type="SMR" id="P0AEM0"/>
<dbReference type="BioGRID" id="4262915">
    <property type="interactions" value="208"/>
</dbReference>
<dbReference type="DIP" id="DIP-35792N"/>
<dbReference type="FunCoup" id="P0AEM0">
    <property type="interactions" value="91"/>
</dbReference>
<dbReference type="IntAct" id="P0AEM0">
    <property type="interactions" value="49"/>
</dbReference>
<dbReference type="STRING" id="511145.b0028"/>
<dbReference type="jPOST" id="P0AEM0"/>
<dbReference type="PaxDb" id="511145-b0028"/>
<dbReference type="EnsemblBacteria" id="AAC73139">
    <property type="protein sequence ID" value="AAC73139"/>
    <property type="gene ID" value="b0028"/>
</dbReference>
<dbReference type="GeneID" id="93777408"/>
<dbReference type="GeneID" id="944807"/>
<dbReference type="KEGG" id="ecj:JW0026"/>
<dbReference type="KEGG" id="eco:b0028"/>
<dbReference type="KEGG" id="ecoc:C3026_00135"/>
<dbReference type="PATRIC" id="fig|1411691.4.peg.2257"/>
<dbReference type="EchoBASE" id="EB1072"/>
<dbReference type="eggNOG" id="COG1047">
    <property type="taxonomic scope" value="Bacteria"/>
</dbReference>
<dbReference type="HOGENOM" id="CLU_098197_3_0_6"/>
<dbReference type="InParanoid" id="P0AEM0"/>
<dbReference type="OMA" id="AKFVMGD"/>
<dbReference type="OrthoDB" id="9808891at2"/>
<dbReference type="PhylomeDB" id="P0AEM0"/>
<dbReference type="BioCyc" id="EcoCyc:EG11080-MONOMER"/>
<dbReference type="BioCyc" id="MetaCyc:EG11080-MONOMER"/>
<dbReference type="EvolutionaryTrace" id="P0AEM0"/>
<dbReference type="PRO" id="PR:P0AEM0"/>
<dbReference type="Proteomes" id="UP000000625">
    <property type="component" value="Chromosome"/>
</dbReference>
<dbReference type="GO" id="GO:0005829">
    <property type="term" value="C:cytosol"/>
    <property type="evidence" value="ECO:0000314"/>
    <property type="project" value="EcoCyc"/>
</dbReference>
<dbReference type="GO" id="GO:0003755">
    <property type="term" value="F:peptidyl-prolyl cis-trans isomerase activity"/>
    <property type="evidence" value="ECO:0000314"/>
    <property type="project" value="EcoCyc"/>
</dbReference>
<dbReference type="GO" id="GO:0061077">
    <property type="term" value="P:chaperone-mediated protein folding"/>
    <property type="evidence" value="ECO:0000314"/>
    <property type="project" value="EcoCyc"/>
</dbReference>
<dbReference type="GO" id="GO:0042026">
    <property type="term" value="P:protein refolding"/>
    <property type="evidence" value="ECO:0000318"/>
    <property type="project" value="GO_Central"/>
</dbReference>
<dbReference type="FunFam" id="2.40.10.330:FF:000002">
    <property type="entry name" value="Peptidyl-prolyl cis-trans isomerase"/>
    <property type="match status" value="1"/>
</dbReference>
<dbReference type="Gene3D" id="2.40.10.330">
    <property type="match status" value="1"/>
</dbReference>
<dbReference type="Gene3D" id="3.10.50.40">
    <property type="match status" value="1"/>
</dbReference>
<dbReference type="InterPro" id="IPR046357">
    <property type="entry name" value="PPIase_dom_sf"/>
</dbReference>
<dbReference type="InterPro" id="IPR001179">
    <property type="entry name" value="PPIase_FKBP_dom"/>
</dbReference>
<dbReference type="InterPro" id="IPR048261">
    <property type="entry name" value="SlpA/SlyD-like_ins_sf"/>
</dbReference>
<dbReference type="NCBIfam" id="NF011676">
    <property type="entry name" value="PRK15095.1"/>
    <property type="match status" value="1"/>
</dbReference>
<dbReference type="PANTHER" id="PTHR47861:SF4">
    <property type="entry name" value="FKBP-TYPE 16 KDA PEPTIDYL-PROLYL CIS-TRANS ISOMERASE"/>
    <property type="match status" value="1"/>
</dbReference>
<dbReference type="PANTHER" id="PTHR47861">
    <property type="entry name" value="FKBP-TYPE PEPTIDYL-PROLYL CIS-TRANS ISOMERASE SLYD"/>
    <property type="match status" value="1"/>
</dbReference>
<dbReference type="Pfam" id="PF00254">
    <property type="entry name" value="FKBP_C"/>
    <property type="match status" value="1"/>
</dbReference>
<dbReference type="SUPFAM" id="SSF54534">
    <property type="entry name" value="FKBP-like"/>
    <property type="match status" value="1"/>
</dbReference>
<dbReference type="PROSITE" id="PS50059">
    <property type="entry name" value="FKBP_PPIASE"/>
    <property type="match status" value="1"/>
</dbReference>
<accession>P0AEM0</accession>
<accession>P22563</accession>
<sequence>MSESVQSNSAVLVHFTLKLDDGTTAESTRNNGKPALFRLGDASLSEGLEQHLLGLKVGDKTTFSLEPDAAFGVPSPDLIQYFSRREFMDAGEPEIGAIMLFTAMDGSEMPGVIREINGDSITVDFNHPLAGQTVHFDIEVLEIDPALEA</sequence>
<keyword id="KW-0002">3D-structure</keyword>
<keyword id="KW-0413">Isomerase</keyword>
<keyword id="KW-1185">Reference proteome</keyword>
<keyword id="KW-0697">Rotamase</keyword>